<evidence type="ECO:0000255" key="1">
    <source>
        <dbReference type="HAMAP-Rule" id="MF_00394"/>
    </source>
</evidence>
<comment type="function">
    <text evidence="1">Catalyzes the reduction of the glycolytic intermediate dihydroxyacetone phosphate (DHAP) to sn-glycerol 3-phosphate (G3P), the key precursor for phospholipid synthesis.</text>
</comment>
<comment type="catalytic activity">
    <reaction evidence="1">
        <text>sn-glycerol 3-phosphate + NAD(+) = dihydroxyacetone phosphate + NADH + H(+)</text>
        <dbReference type="Rhea" id="RHEA:11092"/>
        <dbReference type="ChEBI" id="CHEBI:15378"/>
        <dbReference type="ChEBI" id="CHEBI:57540"/>
        <dbReference type="ChEBI" id="CHEBI:57597"/>
        <dbReference type="ChEBI" id="CHEBI:57642"/>
        <dbReference type="ChEBI" id="CHEBI:57945"/>
        <dbReference type="EC" id="1.1.1.94"/>
    </reaction>
    <physiologicalReaction direction="right-to-left" evidence="1">
        <dbReference type="Rhea" id="RHEA:11094"/>
    </physiologicalReaction>
</comment>
<comment type="catalytic activity">
    <reaction evidence="1">
        <text>sn-glycerol 3-phosphate + NADP(+) = dihydroxyacetone phosphate + NADPH + H(+)</text>
        <dbReference type="Rhea" id="RHEA:11096"/>
        <dbReference type="ChEBI" id="CHEBI:15378"/>
        <dbReference type="ChEBI" id="CHEBI:57597"/>
        <dbReference type="ChEBI" id="CHEBI:57642"/>
        <dbReference type="ChEBI" id="CHEBI:57783"/>
        <dbReference type="ChEBI" id="CHEBI:58349"/>
        <dbReference type="EC" id="1.1.1.94"/>
    </reaction>
    <physiologicalReaction direction="right-to-left" evidence="1">
        <dbReference type="Rhea" id="RHEA:11098"/>
    </physiologicalReaction>
</comment>
<comment type="pathway">
    <text evidence="1">Membrane lipid metabolism; glycerophospholipid metabolism.</text>
</comment>
<comment type="subcellular location">
    <subcellularLocation>
        <location evidence="1">Cytoplasm</location>
    </subcellularLocation>
</comment>
<comment type="similarity">
    <text evidence="1">Belongs to the NAD-dependent glycerol-3-phosphate dehydrogenase family.</text>
</comment>
<dbReference type="EC" id="1.1.1.94" evidence="1"/>
<dbReference type="EMBL" id="CP000555">
    <property type="protein sequence ID" value="ABM93679.1"/>
    <property type="molecule type" value="Genomic_DNA"/>
</dbReference>
<dbReference type="RefSeq" id="WP_011828317.1">
    <property type="nucleotide sequence ID" value="NC_008825.1"/>
</dbReference>
<dbReference type="SMR" id="A2SDP0"/>
<dbReference type="STRING" id="420662.Mpe_A0717"/>
<dbReference type="KEGG" id="mpt:Mpe_A0717"/>
<dbReference type="eggNOG" id="COG0240">
    <property type="taxonomic scope" value="Bacteria"/>
</dbReference>
<dbReference type="HOGENOM" id="CLU_033449_0_2_4"/>
<dbReference type="UniPathway" id="UPA00940"/>
<dbReference type="Proteomes" id="UP000000366">
    <property type="component" value="Chromosome"/>
</dbReference>
<dbReference type="GO" id="GO:0005829">
    <property type="term" value="C:cytosol"/>
    <property type="evidence" value="ECO:0007669"/>
    <property type="project" value="TreeGrafter"/>
</dbReference>
<dbReference type="GO" id="GO:0047952">
    <property type="term" value="F:glycerol-3-phosphate dehydrogenase [NAD(P)+] activity"/>
    <property type="evidence" value="ECO:0007669"/>
    <property type="project" value="UniProtKB-UniRule"/>
</dbReference>
<dbReference type="GO" id="GO:0051287">
    <property type="term" value="F:NAD binding"/>
    <property type="evidence" value="ECO:0007669"/>
    <property type="project" value="InterPro"/>
</dbReference>
<dbReference type="GO" id="GO:0005975">
    <property type="term" value="P:carbohydrate metabolic process"/>
    <property type="evidence" value="ECO:0007669"/>
    <property type="project" value="InterPro"/>
</dbReference>
<dbReference type="GO" id="GO:0046167">
    <property type="term" value="P:glycerol-3-phosphate biosynthetic process"/>
    <property type="evidence" value="ECO:0007669"/>
    <property type="project" value="UniProtKB-UniRule"/>
</dbReference>
<dbReference type="GO" id="GO:0046168">
    <property type="term" value="P:glycerol-3-phosphate catabolic process"/>
    <property type="evidence" value="ECO:0007669"/>
    <property type="project" value="InterPro"/>
</dbReference>
<dbReference type="GO" id="GO:0006650">
    <property type="term" value="P:glycerophospholipid metabolic process"/>
    <property type="evidence" value="ECO:0007669"/>
    <property type="project" value="UniProtKB-UniRule"/>
</dbReference>
<dbReference type="GO" id="GO:0008654">
    <property type="term" value="P:phospholipid biosynthetic process"/>
    <property type="evidence" value="ECO:0007669"/>
    <property type="project" value="UniProtKB-KW"/>
</dbReference>
<dbReference type="FunFam" id="1.10.1040.10:FF:000001">
    <property type="entry name" value="Glycerol-3-phosphate dehydrogenase [NAD(P)+]"/>
    <property type="match status" value="1"/>
</dbReference>
<dbReference type="FunFam" id="3.40.50.720:FF:000019">
    <property type="entry name" value="Glycerol-3-phosphate dehydrogenase [NAD(P)+]"/>
    <property type="match status" value="1"/>
</dbReference>
<dbReference type="Gene3D" id="1.10.1040.10">
    <property type="entry name" value="N-(1-d-carboxylethyl)-l-norvaline Dehydrogenase, domain 2"/>
    <property type="match status" value="1"/>
</dbReference>
<dbReference type="Gene3D" id="3.40.50.720">
    <property type="entry name" value="NAD(P)-binding Rossmann-like Domain"/>
    <property type="match status" value="1"/>
</dbReference>
<dbReference type="HAMAP" id="MF_00394">
    <property type="entry name" value="NAD_Glyc3P_dehydrog"/>
    <property type="match status" value="1"/>
</dbReference>
<dbReference type="InterPro" id="IPR008927">
    <property type="entry name" value="6-PGluconate_DH-like_C_sf"/>
</dbReference>
<dbReference type="InterPro" id="IPR013328">
    <property type="entry name" value="6PGD_dom2"/>
</dbReference>
<dbReference type="InterPro" id="IPR006168">
    <property type="entry name" value="G3P_DH_NAD-dep"/>
</dbReference>
<dbReference type="InterPro" id="IPR006109">
    <property type="entry name" value="G3P_DH_NAD-dep_C"/>
</dbReference>
<dbReference type="InterPro" id="IPR011128">
    <property type="entry name" value="G3P_DH_NAD-dep_N"/>
</dbReference>
<dbReference type="InterPro" id="IPR036291">
    <property type="entry name" value="NAD(P)-bd_dom_sf"/>
</dbReference>
<dbReference type="NCBIfam" id="NF000940">
    <property type="entry name" value="PRK00094.1-2"/>
    <property type="match status" value="1"/>
</dbReference>
<dbReference type="NCBIfam" id="NF000942">
    <property type="entry name" value="PRK00094.1-4"/>
    <property type="match status" value="1"/>
</dbReference>
<dbReference type="PANTHER" id="PTHR11728">
    <property type="entry name" value="GLYCEROL-3-PHOSPHATE DEHYDROGENASE"/>
    <property type="match status" value="1"/>
</dbReference>
<dbReference type="PANTHER" id="PTHR11728:SF1">
    <property type="entry name" value="GLYCEROL-3-PHOSPHATE DEHYDROGENASE [NAD(+)] 2, CHLOROPLASTIC"/>
    <property type="match status" value="1"/>
</dbReference>
<dbReference type="Pfam" id="PF07479">
    <property type="entry name" value="NAD_Gly3P_dh_C"/>
    <property type="match status" value="1"/>
</dbReference>
<dbReference type="Pfam" id="PF01210">
    <property type="entry name" value="NAD_Gly3P_dh_N"/>
    <property type="match status" value="1"/>
</dbReference>
<dbReference type="PIRSF" id="PIRSF000114">
    <property type="entry name" value="Glycerol-3-P_dh"/>
    <property type="match status" value="1"/>
</dbReference>
<dbReference type="PRINTS" id="PR00077">
    <property type="entry name" value="GPDHDRGNASE"/>
</dbReference>
<dbReference type="SUPFAM" id="SSF48179">
    <property type="entry name" value="6-phosphogluconate dehydrogenase C-terminal domain-like"/>
    <property type="match status" value="1"/>
</dbReference>
<dbReference type="SUPFAM" id="SSF51735">
    <property type="entry name" value="NAD(P)-binding Rossmann-fold domains"/>
    <property type="match status" value="1"/>
</dbReference>
<dbReference type="PROSITE" id="PS00957">
    <property type="entry name" value="NAD_G3PDH"/>
    <property type="match status" value="1"/>
</dbReference>
<protein>
    <recommendedName>
        <fullName evidence="1">Glycerol-3-phosphate dehydrogenase [NAD(P)+]</fullName>
        <ecNumber evidence="1">1.1.1.94</ecNumber>
    </recommendedName>
    <alternativeName>
        <fullName evidence="1">NAD(P)(+)-dependent glycerol-3-phosphate dehydrogenase</fullName>
    </alternativeName>
    <alternativeName>
        <fullName evidence="1">NAD(P)H-dependent dihydroxyacetone-phosphate reductase</fullName>
    </alternativeName>
</protein>
<proteinExistence type="inferred from homology"/>
<accession>A2SDP0</accession>
<reference key="1">
    <citation type="journal article" date="2007" name="J. Bacteriol.">
        <title>Whole-genome analysis of the methyl tert-butyl ether-degrading beta-proteobacterium Methylibium petroleiphilum PM1.</title>
        <authorList>
            <person name="Kane S.R."/>
            <person name="Chakicherla A.Y."/>
            <person name="Chain P.S.G."/>
            <person name="Schmidt R."/>
            <person name="Shin M.W."/>
            <person name="Legler T.C."/>
            <person name="Scow K.M."/>
            <person name="Larimer F.W."/>
            <person name="Lucas S.M."/>
            <person name="Richardson P.M."/>
            <person name="Hristova K.R."/>
        </authorList>
    </citation>
    <scope>NUCLEOTIDE SEQUENCE [LARGE SCALE GENOMIC DNA]</scope>
    <source>
        <strain>ATCC BAA-1232 / LMG 22953 / PM1</strain>
    </source>
</reference>
<gene>
    <name evidence="1" type="primary">gpsA</name>
    <name type="ordered locus">Mpe_A0717</name>
</gene>
<name>GPDA_METPP</name>
<sequence length="333" mass="34022">MRITVLGAGAWGTALSVGIAPRHDTLLWARDAAQAAHIEASRDNRRYLPGVALPAALRLTADLDAAIAHAQADGGLIVIATPMSGLREMLARCAASGAGLWWLCKGFEAGTGALGHEVAREVAPAARVGVLSGPSFALEVARGQPTALVAASTDEALRNQAVEAFHSESLRVYTSADPVGVEVGGAVKNVIAIATGIADGMGLGLNARAALVTRGLAEITRLGTALGARVDTFMGLSGLGDLVLTATGDLSRNRQVGLQLAQGRSLPEVLAALGHVAEGVYSAATVLARAQALGVDMPITAAVVAVLDGRLTPAQALERLMRRQARAEGHAPD</sequence>
<keyword id="KW-0963">Cytoplasm</keyword>
<keyword id="KW-0444">Lipid biosynthesis</keyword>
<keyword id="KW-0443">Lipid metabolism</keyword>
<keyword id="KW-0520">NAD</keyword>
<keyword id="KW-0521">NADP</keyword>
<keyword id="KW-0547">Nucleotide-binding</keyword>
<keyword id="KW-0560">Oxidoreductase</keyword>
<keyword id="KW-0594">Phospholipid biosynthesis</keyword>
<keyword id="KW-1208">Phospholipid metabolism</keyword>
<keyword id="KW-1185">Reference proteome</keyword>
<feature type="chain" id="PRO_1000049526" description="Glycerol-3-phosphate dehydrogenase [NAD(P)+]">
    <location>
        <begin position="1"/>
        <end position="333"/>
    </location>
</feature>
<feature type="active site" description="Proton acceptor" evidence="1">
    <location>
        <position position="188"/>
    </location>
</feature>
<feature type="binding site" evidence="1">
    <location>
        <position position="11"/>
    </location>
    <ligand>
        <name>NADPH</name>
        <dbReference type="ChEBI" id="CHEBI:57783"/>
    </ligand>
</feature>
<feature type="binding site" evidence="1">
    <location>
        <position position="30"/>
    </location>
    <ligand>
        <name>NADPH</name>
        <dbReference type="ChEBI" id="CHEBI:57783"/>
    </ligand>
</feature>
<feature type="binding site" evidence="1">
    <location>
        <position position="105"/>
    </location>
    <ligand>
        <name>NADPH</name>
        <dbReference type="ChEBI" id="CHEBI:57783"/>
    </ligand>
</feature>
<feature type="binding site" evidence="1">
    <location>
        <position position="105"/>
    </location>
    <ligand>
        <name>sn-glycerol 3-phosphate</name>
        <dbReference type="ChEBI" id="CHEBI:57597"/>
    </ligand>
</feature>
<feature type="binding site" evidence="1">
    <location>
        <position position="133"/>
    </location>
    <ligand>
        <name>sn-glycerol 3-phosphate</name>
        <dbReference type="ChEBI" id="CHEBI:57597"/>
    </ligand>
</feature>
<feature type="binding site" evidence="1">
    <location>
        <position position="135"/>
    </location>
    <ligand>
        <name>sn-glycerol 3-phosphate</name>
        <dbReference type="ChEBI" id="CHEBI:57597"/>
    </ligand>
</feature>
<feature type="binding site" evidence="1">
    <location>
        <position position="137"/>
    </location>
    <ligand>
        <name>NADPH</name>
        <dbReference type="ChEBI" id="CHEBI:57783"/>
    </ligand>
</feature>
<feature type="binding site" evidence="1">
    <location>
        <position position="188"/>
    </location>
    <ligand>
        <name>sn-glycerol 3-phosphate</name>
        <dbReference type="ChEBI" id="CHEBI:57597"/>
    </ligand>
</feature>
<feature type="binding site" evidence="1">
    <location>
        <position position="241"/>
    </location>
    <ligand>
        <name>sn-glycerol 3-phosphate</name>
        <dbReference type="ChEBI" id="CHEBI:57597"/>
    </ligand>
</feature>
<feature type="binding site" evidence="1">
    <location>
        <position position="251"/>
    </location>
    <ligand>
        <name>sn-glycerol 3-phosphate</name>
        <dbReference type="ChEBI" id="CHEBI:57597"/>
    </ligand>
</feature>
<feature type="binding site" evidence="1">
    <location>
        <position position="252"/>
    </location>
    <ligand>
        <name>NADPH</name>
        <dbReference type="ChEBI" id="CHEBI:57783"/>
    </ligand>
</feature>
<feature type="binding site" evidence="1">
    <location>
        <position position="252"/>
    </location>
    <ligand>
        <name>sn-glycerol 3-phosphate</name>
        <dbReference type="ChEBI" id="CHEBI:57597"/>
    </ligand>
</feature>
<feature type="binding site" evidence="1">
    <location>
        <position position="253"/>
    </location>
    <ligand>
        <name>sn-glycerol 3-phosphate</name>
        <dbReference type="ChEBI" id="CHEBI:57597"/>
    </ligand>
</feature>
<feature type="binding site" evidence="1">
    <location>
        <position position="276"/>
    </location>
    <ligand>
        <name>NADPH</name>
        <dbReference type="ChEBI" id="CHEBI:57783"/>
    </ligand>
</feature>
<feature type="binding site" evidence="1">
    <location>
        <position position="278"/>
    </location>
    <ligand>
        <name>NADPH</name>
        <dbReference type="ChEBI" id="CHEBI:57783"/>
    </ligand>
</feature>
<organism>
    <name type="scientific">Methylibium petroleiphilum (strain ATCC BAA-1232 / LMG 22953 / PM1)</name>
    <dbReference type="NCBI Taxonomy" id="420662"/>
    <lineage>
        <taxon>Bacteria</taxon>
        <taxon>Pseudomonadati</taxon>
        <taxon>Pseudomonadota</taxon>
        <taxon>Betaproteobacteria</taxon>
        <taxon>Burkholderiales</taxon>
        <taxon>Sphaerotilaceae</taxon>
        <taxon>Methylibium</taxon>
    </lineage>
</organism>